<organism>
    <name type="scientific">Syntrophus aciditrophicus (strain SB)</name>
    <dbReference type="NCBI Taxonomy" id="56780"/>
    <lineage>
        <taxon>Bacteria</taxon>
        <taxon>Pseudomonadati</taxon>
        <taxon>Thermodesulfobacteriota</taxon>
        <taxon>Syntrophia</taxon>
        <taxon>Syntrophales</taxon>
        <taxon>Syntrophaceae</taxon>
        <taxon>Syntrophus</taxon>
    </lineage>
</organism>
<dbReference type="EC" id="5.2.1.8" evidence="1"/>
<dbReference type="EMBL" id="CP000252">
    <property type="protein sequence ID" value="ABC77413.1"/>
    <property type="molecule type" value="Genomic_DNA"/>
</dbReference>
<dbReference type="RefSeq" id="WP_011417435.1">
    <property type="nucleotide sequence ID" value="NC_007759.1"/>
</dbReference>
<dbReference type="SMR" id="Q2LTK6"/>
<dbReference type="FunCoup" id="Q2LTK6">
    <property type="interactions" value="593"/>
</dbReference>
<dbReference type="STRING" id="56780.SYN_02784"/>
<dbReference type="KEGG" id="sat:SYN_02784"/>
<dbReference type="eggNOG" id="COG0544">
    <property type="taxonomic scope" value="Bacteria"/>
</dbReference>
<dbReference type="HOGENOM" id="CLU_033058_3_2_7"/>
<dbReference type="InParanoid" id="Q2LTK6"/>
<dbReference type="OrthoDB" id="9767721at2"/>
<dbReference type="Proteomes" id="UP000001933">
    <property type="component" value="Chromosome"/>
</dbReference>
<dbReference type="GO" id="GO:0005737">
    <property type="term" value="C:cytoplasm"/>
    <property type="evidence" value="ECO:0007669"/>
    <property type="project" value="UniProtKB-SubCell"/>
</dbReference>
<dbReference type="GO" id="GO:0003755">
    <property type="term" value="F:peptidyl-prolyl cis-trans isomerase activity"/>
    <property type="evidence" value="ECO:0007669"/>
    <property type="project" value="UniProtKB-UniRule"/>
</dbReference>
<dbReference type="GO" id="GO:0044183">
    <property type="term" value="F:protein folding chaperone"/>
    <property type="evidence" value="ECO:0007669"/>
    <property type="project" value="TreeGrafter"/>
</dbReference>
<dbReference type="GO" id="GO:0043022">
    <property type="term" value="F:ribosome binding"/>
    <property type="evidence" value="ECO:0007669"/>
    <property type="project" value="TreeGrafter"/>
</dbReference>
<dbReference type="GO" id="GO:0051083">
    <property type="term" value="P:'de novo' cotranslational protein folding"/>
    <property type="evidence" value="ECO:0007669"/>
    <property type="project" value="TreeGrafter"/>
</dbReference>
<dbReference type="GO" id="GO:0051301">
    <property type="term" value="P:cell division"/>
    <property type="evidence" value="ECO:0007669"/>
    <property type="project" value="UniProtKB-KW"/>
</dbReference>
<dbReference type="GO" id="GO:0061077">
    <property type="term" value="P:chaperone-mediated protein folding"/>
    <property type="evidence" value="ECO:0007669"/>
    <property type="project" value="TreeGrafter"/>
</dbReference>
<dbReference type="GO" id="GO:0015031">
    <property type="term" value="P:protein transport"/>
    <property type="evidence" value="ECO:0007669"/>
    <property type="project" value="UniProtKB-UniRule"/>
</dbReference>
<dbReference type="GO" id="GO:0043335">
    <property type="term" value="P:protein unfolding"/>
    <property type="evidence" value="ECO:0007669"/>
    <property type="project" value="TreeGrafter"/>
</dbReference>
<dbReference type="FunFam" id="3.10.50.40:FF:000001">
    <property type="entry name" value="Trigger factor"/>
    <property type="match status" value="1"/>
</dbReference>
<dbReference type="Gene3D" id="3.10.50.40">
    <property type="match status" value="1"/>
</dbReference>
<dbReference type="Gene3D" id="3.30.70.1050">
    <property type="entry name" value="Trigger factor ribosome-binding domain"/>
    <property type="match status" value="1"/>
</dbReference>
<dbReference type="Gene3D" id="1.10.3120.10">
    <property type="entry name" value="Trigger factor, C-terminal domain"/>
    <property type="match status" value="1"/>
</dbReference>
<dbReference type="HAMAP" id="MF_00303">
    <property type="entry name" value="Trigger_factor_Tig"/>
    <property type="match status" value="1"/>
</dbReference>
<dbReference type="InterPro" id="IPR046357">
    <property type="entry name" value="PPIase_dom_sf"/>
</dbReference>
<dbReference type="InterPro" id="IPR001179">
    <property type="entry name" value="PPIase_FKBP_dom"/>
</dbReference>
<dbReference type="InterPro" id="IPR005215">
    <property type="entry name" value="Trig_fac"/>
</dbReference>
<dbReference type="InterPro" id="IPR008880">
    <property type="entry name" value="Trigger_fac_C"/>
</dbReference>
<dbReference type="InterPro" id="IPR037041">
    <property type="entry name" value="Trigger_fac_C_sf"/>
</dbReference>
<dbReference type="InterPro" id="IPR008881">
    <property type="entry name" value="Trigger_fac_ribosome-bd_bac"/>
</dbReference>
<dbReference type="InterPro" id="IPR036611">
    <property type="entry name" value="Trigger_fac_ribosome-bd_sf"/>
</dbReference>
<dbReference type="InterPro" id="IPR027304">
    <property type="entry name" value="Trigger_fact/SurA_dom_sf"/>
</dbReference>
<dbReference type="NCBIfam" id="TIGR00115">
    <property type="entry name" value="tig"/>
    <property type="match status" value="1"/>
</dbReference>
<dbReference type="PANTHER" id="PTHR30560">
    <property type="entry name" value="TRIGGER FACTOR CHAPERONE AND PEPTIDYL-PROLYL CIS/TRANS ISOMERASE"/>
    <property type="match status" value="1"/>
</dbReference>
<dbReference type="PANTHER" id="PTHR30560:SF3">
    <property type="entry name" value="TRIGGER FACTOR-LIKE PROTEIN TIG, CHLOROPLASTIC"/>
    <property type="match status" value="1"/>
</dbReference>
<dbReference type="Pfam" id="PF00254">
    <property type="entry name" value="FKBP_C"/>
    <property type="match status" value="1"/>
</dbReference>
<dbReference type="Pfam" id="PF05698">
    <property type="entry name" value="Trigger_C"/>
    <property type="match status" value="1"/>
</dbReference>
<dbReference type="Pfam" id="PF05697">
    <property type="entry name" value="Trigger_N"/>
    <property type="match status" value="1"/>
</dbReference>
<dbReference type="PIRSF" id="PIRSF003095">
    <property type="entry name" value="Trigger_factor"/>
    <property type="match status" value="1"/>
</dbReference>
<dbReference type="SUPFAM" id="SSF54534">
    <property type="entry name" value="FKBP-like"/>
    <property type="match status" value="1"/>
</dbReference>
<dbReference type="SUPFAM" id="SSF109998">
    <property type="entry name" value="Triger factor/SurA peptide-binding domain-like"/>
    <property type="match status" value="1"/>
</dbReference>
<dbReference type="SUPFAM" id="SSF102735">
    <property type="entry name" value="Trigger factor ribosome-binding domain"/>
    <property type="match status" value="1"/>
</dbReference>
<dbReference type="PROSITE" id="PS50059">
    <property type="entry name" value="FKBP_PPIASE"/>
    <property type="match status" value="1"/>
</dbReference>
<name>TIG_SYNAS</name>
<reference key="1">
    <citation type="journal article" date="2007" name="Proc. Natl. Acad. Sci. U.S.A.">
        <title>The genome of Syntrophus aciditrophicus: life at the thermodynamic limit of microbial growth.</title>
        <authorList>
            <person name="McInerney M.J."/>
            <person name="Rohlin L."/>
            <person name="Mouttaki H."/>
            <person name="Kim U."/>
            <person name="Krupp R.S."/>
            <person name="Rios-Hernandez L."/>
            <person name="Sieber J."/>
            <person name="Struchtemeyer C.G."/>
            <person name="Bhattacharyya A."/>
            <person name="Campbell J.W."/>
            <person name="Gunsalus R.P."/>
        </authorList>
    </citation>
    <scope>NUCLEOTIDE SEQUENCE [LARGE SCALE GENOMIC DNA]</scope>
    <source>
        <strain>SB</strain>
    </source>
</reference>
<evidence type="ECO:0000255" key="1">
    <source>
        <dbReference type="HAMAP-Rule" id="MF_00303"/>
    </source>
</evidence>
<accession>Q2LTK6</accession>
<keyword id="KW-0131">Cell cycle</keyword>
<keyword id="KW-0132">Cell division</keyword>
<keyword id="KW-0143">Chaperone</keyword>
<keyword id="KW-0963">Cytoplasm</keyword>
<keyword id="KW-0413">Isomerase</keyword>
<keyword id="KW-1185">Reference proteome</keyword>
<keyword id="KW-0697">Rotamase</keyword>
<comment type="function">
    <text evidence="1">Involved in protein export. Acts as a chaperone by maintaining the newly synthesized protein in an open conformation. Functions as a peptidyl-prolyl cis-trans isomerase.</text>
</comment>
<comment type="catalytic activity">
    <reaction evidence="1">
        <text>[protein]-peptidylproline (omega=180) = [protein]-peptidylproline (omega=0)</text>
        <dbReference type="Rhea" id="RHEA:16237"/>
        <dbReference type="Rhea" id="RHEA-COMP:10747"/>
        <dbReference type="Rhea" id="RHEA-COMP:10748"/>
        <dbReference type="ChEBI" id="CHEBI:83833"/>
        <dbReference type="ChEBI" id="CHEBI:83834"/>
        <dbReference type="EC" id="5.2.1.8"/>
    </reaction>
</comment>
<comment type="subcellular location">
    <subcellularLocation>
        <location>Cytoplasm</location>
    </subcellularLocation>
    <text evidence="1">About half TF is bound to the ribosome near the polypeptide exit tunnel while the other half is free in the cytoplasm.</text>
</comment>
<comment type="domain">
    <text evidence="1">Consists of 3 domains; the N-terminus binds the ribosome, the middle domain has PPIase activity, while the C-terminus has intrinsic chaperone activity on its own.</text>
</comment>
<comment type="similarity">
    <text evidence="1">Belongs to the FKBP-type PPIase family. Tig subfamily.</text>
</comment>
<proteinExistence type="inferred from homology"/>
<feature type="chain" id="PRO_0000256635" description="Trigger factor">
    <location>
        <begin position="1"/>
        <end position="443"/>
    </location>
</feature>
<feature type="domain" description="PPIase FKBP-type" evidence="1">
    <location>
        <begin position="168"/>
        <end position="254"/>
    </location>
</feature>
<sequence>MDENTVAVKVEEISPVKKKLLFDVPWEDVKRERDTIYRNFSRTAKIKGFRKGKIPRKILELHYKKHAEEETVSSLVSRLYWDALKEHDIRAISQPEIEQQGIEEEKDFSFSATVEVEPQIDPQGYLDMTLSKEEQTVTEDEVDGRLEDIRKMFGTLEEVTEDREIRKGDFVTIDFEGFIDGQNPEEMKRNDYFLEIGSNTMVPGFEDQLLGEKVGTIKEIKIIFPENYQINSNVAGKDATFKVTIKNLKEKKLPELDENFVKNFDKYESLDDLKEDVRKSLFEDHKRKTEADMSKKIMDKLLEMNDFDAPSSYVERQIFFMMMEARKRLITTGMDPAMIDQVSASWHDKYKDEATRIVKSSLLLKSIAQKESIDVTDEEFEERLREIARQYSQDYEKIKDSFNEDMKENVRNDILNKKVFDFIESKASVSMIEKEKTSPEEAN</sequence>
<protein>
    <recommendedName>
        <fullName evidence="1">Trigger factor</fullName>
        <shortName evidence="1">TF</shortName>
        <ecNumber evidence="1">5.2.1.8</ecNumber>
    </recommendedName>
    <alternativeName>
        <fullName evidence="1">PPIase</fullName>
    </alternativeName>
</protein>
<gene>
    <name evidence="1" type="primary">tig</name>
    <name type="ordered locus">SYNAS_15340</name>
    <name type="ORF">SYN_02784</name>
</gene>